<gene>
    <name type="ordered locus">PAE0818</name>
</gene>
<organism>
    <name type="scientific">Pyrobaculum aerophilum (strain ATCC 51768 / DSM 7523 / JCM 9630 / CIP 104966 / NBRC 100827 / IM2)</name>
    <dbReference type="NCBI Taxonomy" id="178306"/>
    <lineage>
        <taxon>Archaea</taxon>
        <taxon>Thermoproteota</taxon>
        <taxon>Thermoprotei</taxon>
        <taxon>Thermoproteales</taxon>
        <taxon>Thermoproteaceae</taxon>
        <taxon>Pyrobaculum</taxon>
    </lineage>
</organism>
<evidence type="ECO:0000255" key="1">
    <source>
        <dbReference type="HAMAP-Rule" id="MF_00055"/>
    </source>
</evidence>
<keyword id="KW-1185">Reference proteome</keyword>
<protein>
    <recommendedName>
        <fullName evidence="1">MEMO1 family protein PAE0818</fullName>
    </recommendedName>
</protein>
<accession>Q8ZYE1</accession>
<proteinExistence type="inferred from homology"/>
<dbReference type="EMBL" id="AE009441">
    <property type="protein sequence ID" value="AAL63052.1"/>
    <property type="molecule type" value="Genomic_DNA"/>
</dbReference>
<dbReference type="RefSeq" id="WP_011007524.1">
    <property type="nucleotide sequence ID" value="NC_003364.1"/>
</dbReference>
<dbReference type="SMR" id="Q8ZYE1"/>
<dbReference type="FunCoup" id="Q8ZYE1">
    <property type="interactions" value="53"/>
</dbReference>
<dbReference type="STRING" id="178306.PAE0818"/>
<dbReference type="EnsemblBacteria" id="AAL63052">
    <property type="protein sequence ID" value="AAL63052"/>
    <property type="gene ID" value="PAE0818"/>
</dbReference>
<dbReference type="GeneID" id="1465281"/>
<dbReference type="KEGG" id="pai:PAE0818"/>
<dbReference type="PATRIC" id="fig|178306.9.peg.601"/>
<dbReference type="eggNOG" id="arCOG01728">
    <property type="taxonomic scope" value="Archaea"/>
</dbReference>
<dbReference type="HOGENOM" id="CLU_038085_2_0_2"/>
<dbReference type="InParanoid" id="Q8ZYE1"/>
<dbReference type="Proteomes" id="UP000002439">
    <property type="component" value="Chromosome"/>
</dbReference>
<dbReference type="CDD" id="cd07361">
    <property type="entry name" value="MEMO_like"/>
    <property type="match status" value="1"/>
</dbReference>
<dbReference type="Gene3D" id="3.40.830.10">
    <property type="entry name" value="LigB-like"/>
    <property type="match status" value="1"/>
</dbReference>
<dbReference type="HAMAP" id="MF_00055">
    <property type="entry name" value="MEMO1"/>
    <property type="match status" value="1"/>
</dbReference>
<dbReference type="InterPro" id="IPR002737">
    <property type="entry name" value="MEMO1_fam"/>
</dbReference>
<dbReference type="NCBIfam" id="TIGR04336">
    <property type="entry name" value="AmmeMemoSam_B"/>
    <property type="match status" value="1"/>
</dbReference>
<dbReference type="PANTHER" id="PTHR11060">
    <property type="entry name" value="PROTEIN MEMO1"/>
    <property type="match status" value="1"/>
</dbReference>
<dbReference type="PANTHER" id="PTHR11060:SF0">
    <property type="entry name" value="PROTEIN MEMO1"/>
    <property type="match status" value="1"/>
</dbReference>
<dbReference type="Pfam" id="PF01875">
    <property type="entry name" value="Memo"/>
    <property type="match status" value="1"/>
</dbReference>
<dbReference type="SUPFAM" id="SSF53213">
    <property type="entry name" value="LigB-like"/>
    <property type="match status" value="1"/>
</dbReference>
<feature type="chain" id="PRO_0000134385" description="MEMO1 family protein PAE0818">
    <location>
        <begin position="1"/>
        <end position="281"/>
    </location>
</feature>
<reference key="1">
    <citation type="journal article" date="2002" name="Proc. Natl. Acad. Sci. U.S.A.">
        <title>Genome sequence of the hyperthermophilic crenarchaeon Pyrobaculum aerophilum.</title>
        <authorList>
            <person name="Fitz-Gibbon S.T."/>
            <person name="Ladner H."/>
            <person name="Kim U.-J."/>
            <person name="Stetter K.O."/>
            <person name="Simon M.I."/>
            <person name="Miller J.H."/>
        </authorList>
    </citation>
    <scope>NUCLEOTIDE SEQUENCE [LARGE SCALE GENOMIC DNA]</scope>
    <source>
        <strain>ATCC 51768 / DSM 7523 / JCM 9630 / CIP 104966 / NBRC 100827 / IM2</strain>
    </source>
</reference>
<sequence>MRVRKPAVAGYFYESGREELLQQIEWAVKHELGPKALQMPKLGGEALGGVAPHAGYMYSGPVAAWLYSALAGYGKPDVFVIVGPNHYGIGAPVAIMKSGAWETPLGRVEVDRELAEVITSHFKEVEDDFYAFSKEHSVEVQVPFIQYYFGDVKIVPIVMWRQTLSTSRELGRAIAKALKEYGRKAYVIASSDFNHYEPHDITTRKDEMAISKILKLDEAGLFEISSKFDISICGIGPIGVLIAAAKELGYINVTLLKHATSGDTSGYKDETVGYASILFYR</sequence>
<comment type="similarity">
    <text evidence="1">Belongs to the MEMO1 family.</text>
</comment>
<name>Y818_PYRAE</name>